<protein>
    <recommendedName>
        <fullName evidence="1">Adenylosuccinate synthetase</fullName>
        <shortName evidence="1">AMPSase</shortName>
        <shortName evidence="1">AdSS</shortName>
        <ecNumber evidence="1">6.3.4.4</ecNumber>
    </recommendedName>
    <alternativeName>
        <fullName evidence="1">IMP--aspartate ligase</fullName>
    </alternativeName>
</protein>
<accession>A9N4Z1</accession>
<keyword id="KW-0963">Cytoplasm</keyword>
<keyword id="KW-0342">GTP-binding</keyword>
<keyword id="KW-0436">Ligase</keyword>
<keyword id="KW-0460">Magnesium</keyword>
<keyword id="KW-0479">Metal-binding</keyword>
<keyword id="KW-0547">Nucleotide-binding</keyword>
<keyword id="KW-0658">Purine biosynthesis</keyword>
<reference key="1">
    <citation type="submission" date="2007-11" db="EMBL/GenBank/DDBJ databases">
        <authorList>
            <consortium name="The Salmonella enterica serovar Paratyphi B Genome Sequencing Project"/>
            <person name="McClelland M."/>
            <person name="Sanderson E.K."/>
            <person name="Porwollik S."/>
            <person name="Spieth J."/>
            <person name="Clifton W.S."/>
            <person name="Fulton R."/>
            <person name="Cordes M."/>
            <person name="Wollam A."/>
            <person name="Shah N."/>
            <person name="Pepin K."/>
            <person name="Bhonagiri V."/>
            <person name="Nash W."/>
            <person name="Johnson M."/>
            <person name="Thiruvilangam P."/>
            <person name="Wilson R."/>
        </authorList>
    </citation>
    <scope>NUCLEOTIDE SEQUENCE [LARGE SCALE GENOMIC DNA]</scope>
    <source>
        <strain>ATCC BAA-1250 / SPB7</strain>
    </source>
</reference>
<proteinExistence type="inferred from homology"/>
<feature type="chain" id="PRO_1000073959" description="Adenylosuccinate synthetase">
    <location>
        <begin position="1"/>
        <end position="432"/>
    </location>
</feature>
<feature type="active site" description="Proton acceptor" evidence="1">
    <location>
        <position position="14"/>
    </location>
</feature>
<feature type="active site" description="Proton donor" evidence="1">
    <location>
        <position position="42"/>
    </location>
</feature>
<feature type="binding site" evidence="1">
    <location>
        <begin position="13"/>
        <end position="19"/>
    </location>
    <ligand>
        <name>GTP</name>
        <dbReference type="ChEBI" id="CHEBI:37565"/>
    </ligand>
</feature>
<feature type="binding site" description="in other chain" evidence="1">
    <location>
        <begin position="14"/>
        <end position="17"/>
    </location>
    <ligand>
        <name>IMP</name>
        <dbReference type="ChEBI" id="CHEBI:58053"/>
        <note>ligand shared between dimeric partners</note>
    </ligand>
</feature>
<feature type="binding site" evidence="1">
    <location>
        <position position="14"/>
    </location>
    <ligand>
        <name>Mg(2+)</name>
        <dbReference type="ChEBI" id="CHEBI:18420"/>
    </ligand>
</feature>
<feature type="binding site" description="in other chain" evidence="1">
    <location>
        <begin position="39"/>
        <end position="42"/>
    </location>
    <ligand>
        <name>IMP</name>
        <dbReference type="ChEBI" id="CHEBI:58053"/>
        <note>ligand shared between dimeric partners</note>
    </ligand>
</feature>
<feature type="binding site" evidence="1">
    <location>
        <begin position="41"/>
        <end position="43"/>
    </location>
    <ligand>
        <name>GTP</name>
        <dbReference type="ChEBI" id="CHEBI:37565"/>
    </ligand>
</feature>
<feature type="binding site" evidence="1">
    <location>
        <position position="41"/>
    </location>
    <ligand>
        <name>Mg(2+)</name>
        <dbReference type="ChEBI" id="CHEBI:18420"/>
    </ligand>
</feature>
<feature type="binding site" description="in other chain" evidence="1">
    <location>
        <position position="130"/>
    </location>
    <ligand>
        <name>IMP</name>
        <dbReference type="ChEBI" id="CHEBI:58053"/>
        <note>ligand shared between dimeric partners</note>
    </ligand>
</feature>
<feature type="binding site" evidence="1">
    <location>
        <position position="144"/>
    </location>
    <ligand>
        <name>IMP</name>
        <dbReference type="ChEBI" id="CHEBI:58053"/>
        <note>ligand shared between dimeric partners</note>
    </ligand>
</feature>
<feature type="binding site" description="in other chain" evidence="1">
    <location>
        <position position="225"/>
    </location>
    <ligand>
        <name>IMP</name>
        <dbReference type="ChEBI" id="CHEBI:58053"/>
        <note>ligand shared between dimeric partners</note>
    </ligand>
</feature>
<feature type="binding site" description="in other chain" evidence="1">
    <location>
        <position position="240"/>
    </location>
    <ligand>
        <name>IMP</name>
        <dbReference type="ChEBI" id="CHEBI:58053"/>
        <note>ligand shared between dimeric partners</note>
    </ligand>
</feature>
<feature type="binding site" evidence="1">
    <location>
        <begin position="300"/>
        <end position="306"/>
    </location>
    <ligand>
        <name>substrate</name>
    </ligand>
</feature>
<feature type="binding site" description="in other chain" evidence="1">
    <location>
        <position position="304"/>
    </location>
    <ligand>
        <name>IMP</name>
        <dbReference type="ChEBI" id="CHEBI:58053"/>
        <note>ligand shared between dimeric partners</note>
    </ligand>
</feature>
<feature type="binding site" evidence="1">
    <location>
        <position position="306"/>
    </location>
    <ligand>
        <name>GTP</name>
        <dbReference type="ChEBI" id="CHEBI:37565"/>
    </ligand>
</feature>
<feature type="binding site" evidence="1">
    <location>
        <begin position="332"/>
        <end position="334"/>
    </location>
    <ligand>
        <name>GTP</name>
        <dbReference type="ChEBI" id="CHEBI:37565"/>
    </ligand>
</feature>
<feature type="binding site" evidence="1">
    <location>
        <begin position="415"/>
        <end position="417"/>
    </location>
    <ligand>
        <name>GTP</name>
        <dbReference type="ChEBI" id="CHEBI:37565"/>
    </ligand>
</feature>
<evidence type="ECO:0000255" key="1">
    <source>
        <dbReference type="HAMAP-Rule" id="MF_00011"/>
    </source>
</evidence>
<sequence>MGNNVVVLGTQWGDEGKGKIVDLLTERAKYVVRYQGGHNAGHTLVINGEKTVLHLIPSGILRENVTSIIGNGVVLSPSALMKEMKELEDRGIPVRERLLLSEACPLILDYHVALDNAREKARGAKAIGTTGRGIGPAYEDKVARRGLRVGDLFDKETFAEKLKEVMEYHNFQLVNYYKAEAVDYQKVLDDTMAVADILTSMVVDVSDLLDQARQRGDFVMFEGAQGTLLDIDHGTYPYVTSSNTTAGGVATGSGLGPRYVDYVLGILKAYSTRVGAGPFPTELFDETGEFLCKQGNEYGATTGRRRRTGWLDTVAVRRAVQLNSLSGFCLTKLDVLDGLKEVKLCVAYRMPDGREVTTTPLAADDWKGVEPIYETMPGWSESTFGVKDRSGLPQAALNYIKRIEELTGVPIDIISTGPDRTETMILRDPFDA</sequence>
<organism>
    <name type="scientific">Salmonella paratyphi B (strain ATCC BAA-1250 / SPB7)</name>
    <dbReference type="NCBI Taxonomy" id="1016998"/>
    <lineage>
        <taxon>Bacteria</taxon>
        <taxon>Pseudomonadati</taxon>
        <taxon>Pseudomonadota</taxon>
        <taxon>Gammaproteobacteria</taxon>
        <taxon>Enterobacterales</taxon>
        <taxon>Enterobacteriaceae</taxon>
        <taxon>Salmonella</taxon>
    </lineage>
</organism>
<dbReference type="EC" id="6.3.4.4" evidence="1"/>
<dbReference type="EMBL" id="CP000886">
    <property type="protein sequence ID" value="ABX70768.1"/>
    <property type="molecule type" value="Genomic_DNA"/>
</dbReference>
<dbReference type="RefSeq" id="WP_000527972.1">
    <property type="nucleotide sequence ID" value="NC_010102.1"/>
</dbReference>
<dbReference type="SMR" id="A9N4Z1"/>
<dbReference type="KEGG" id="spq:SPAB_05499"/>
<dbReference type="PATRIC" id="fig|1016998.12.peg.5153"/>
<dbReference type="HOGENOM" id="CLU_029848_0_0_6"/>
<dbReference type="BioCyc" id="SENT1016998:SPAB_RS22440-MONOMER"/>
<dbReference type="UniPathway" id="UPA00075">
    <property type="reaction ID" value="UER00335"/>
</dbReference>
<dbReference type="Proteomes" id="UP000008556">
    <property type="component" value="Chromosome"/>
</dbReference>
<dbReference type="GO" id="GO:0005737">
    <property type="term" value="C:cytoplasm"/>
    <property type="evidence" value="ECO:0007669"/>
    <property type="project" value="UniProtKB-SubCell"/>
</dbReference>
<dbReference type="GO" id="GO:0004019">
    <property type="term" value="F:adenylosuccinate synthase activity"/>
    <property type="evidence" value="ECO:0007669"/>
    <property type="project" value="UniProtKB-UniRule"/>
</dbReference>
<dbReference type="GO" id="GO:0005525">
    <property type="term" value="F:GTP binding"/>
    <property type="evidence" value="ECO:0007669"/>
    <property type="project" value="UniProtKB-UniRule"/>
</dbReference>
<dbReference type="GO" id="GO:0000287">
    <property type="term" value="F:magnesium ion binding"/>
    <property type="evidence" value="ECO:0007669"/>
    <property type="project" value="UniProtKB-UniRule"/>
</dbReference>
<dbReference type="GO" id="GO:0044208">
    <property type="term" value="P:'de novo' AMP biosynthetic process"/>
    <property type="evidence" value="ECO:0007669"/>
    <property type="project" value="UniProtKB-UniRule"/>
</dbReference>
<dbReference type="GO" id="GO:0046040">
    <property type="term" value="P:IMP metabolic process"/>
    <property type="evidence" value="ECO:0007669"/>
    <property type="project" value="TreeGrafter"/>
</dbReference>
<dbReference type="CDD" id="cd03108">
    <property type="entry name" value="AdSS"/>
    <property type="match status" value="1"/>
</dbReference>
<dbReference type="FunFam" id="1.10.300.10:FF:000001">
    <property type="entry name" value="Adenylosuccinate synthetase"/>
    <property type="match status" value="1"/>
</dbReference>
<dbReference type="FunFam" id="3.90.170.10:FF:000001">
    <property type="entry name" value="Adenylosuccinate synthetase"/>
    <property type="match status" value="1"/>
</dbReference>
<dbReference type="Gene3D" id="3.40.440.10">
    <property type="entry name" value="Adenylosuccinate Synthetase, subunit A, domain 1"/>
    <property type="match status" value="1"/>
</dbReference>
<dbReference type="Gene3D" id="1.10.300.10">
    <property type="entry name" value="Adenylosuccinate Synthetase, subunit A, domain 2"/>
    <property type="match status" value="1"/>
</dbReference>
<dbReference type="Gene3D" id="3.90.170.10">
    <property type="entry name" value="Adenylosuccinate Synthetase, subunit A, domain 3"/>
    <property type="match status" value="1"/>
</dbReference>
<dbReference type="HAMAP" id="MF_00011">
    <property type="entry name" value="Adenylosucc_synth"/>
    <property type="match status" value="1"/>
</dbReference>
<dbReference type="InterPro" id="IPR018220">
    <property type="entry name" value="Adenylosuccin_syn_GTP-bd"/>
</dbReference>
<dbReference type="InterPro" id="IPR033128">
    <property type="entry name" value="Adenylosuccin_syn_Lys_AS"/>
</dbReference>
<dbReference type="InterPro" id="IPR042109">
    <property type="entry name" value="Adenylosuccinate_synth_dom1"/>
</dbReference>
<dbReference type="InterPro" id="IPR042110">
    <property type="entry name" value="Adenylosuccinate_synth_dom2"/>
</dbReference>
<dbReference type="InterPro" id="IPR042111">
    <property type="entry name" value="Adenylosuccinate_synth_dom3"/>
</dbReference>
<dbReference type="InterPro" id="IPR001114">
    <property type="entry name" value="Adenylosuccinate_synthetase"/>
</dbReference>
<dbReference type="InterPro" id="IPR027417">
    <property type="entry name" value="P-loop_NTPase"/>
</dbReference>
<dbReference type="NCBIfam" id="NF002223">
    <property type="entry name" value="PRK01117.1"/>
    <property type="match status" value="1"/>
</dbReference>
<dbReference type="NCBIfam" id="TIGR00184">
    <property type="entry name" value="purA"/>
    <property type="match status" value="1"/>
</dbReference>
<dbReference type="PANTHER" id="PTHR11846">
    <property type="entry name" value="ADENYLOSUCCINATE SYNTHETASE"/>
    <property type="match status" value="1"/>
</dbReference>
<dbReference type="PANTHER" id="PTHR11846:SF0">
    <property type="entry name" value="ADENYLOSUCCINATE SYNTHETASE"/>
    <property type="match status" value="1"/>
</dbReference>
<dbReference type="Pfam" id="PF00709">
    <property type="entry name" value="Adenylsucc_synt"/>
    <property type="match status" value="1"/>
</dbReference>
<dbReference type="SMART" id="SM00788">
    <property type="entry name" value="Adenylsucc_synt"/>
    <property type="match status" value="1"/>
</dbReference>
<dbReference type="SUPFAM" id="SSF52540">
    <property type="entry name" value="P-loop containing nucleoside triphosphate hydrolases"/>
    <property type="match status" value="1"/>
</dbReference>
<dbReference type="PROSITE" id="PS01266">
    <property type="entry name" value="ADENYLOSUCCIN_SYN_1"/>
    <property type="match status" value="1"/>
</dbReference>
<dbReference type="PROSITE" id="PS00513">
    <property type="entry name" value="ADENYLOSUCCIN_SYN_2"/>
    <property type="match status" value="1"/>
</dbReference>
<gene>
    <name evidence="1" type="primary">purA</name>
    <name type="ordered locus">SPAB_05499</name>
</gene>
<name>PURA_SALPB</name>
<comment type="function">
    <text evidence="1">Plays an important role in the de novo pathway of purine nucleotide biosynthesis. Catalyzes the first committed step in the biosynthesis of AMP from IMP.</text>
</comment>
<comment type="catalytic activity">
    <reaction evidence="1">
        <text>IMP + L-aspartate + GTP = N(6)-(1,2-dicarboxyethyl)-AMP + GDP + phosphate + 2 H(+)</text>
        <dbReference type="Rhea" id="RHEA:15753"/>
        <dbReference type="ChEBI" id="CHEBI:15378"/>
        <dbReference type="ChEBI" id="CHEBI:29991"/>
        <dbReference type="ChEBI" id="CHEBI:37565"/>
        <dbReference type="ChEBI" id="CHEBI:43474"/>
        <dbReference type="ChEBI" id="CHEBI:57567"/>
        <dbReference type="ChEBI" id="CHEBI:58053"/>
        <dbReference type="ChEBI" id="CHEBI:58189"/>
        <dbReference type="EC" id="6.3.4.4"/>
    </reaction>
</comment>
<comment type="cofactor">
    <cofactor evidence="1">
        <name>Mg(2+)</name>
        <dbReference type="ChEBI" id="CHEBI:18420"/>
    </cofactor>
    <text evidence="1">Binds 1 Mg(2+) ion per subunit.</text>
</comment>
<comment type="pathway">
    <text evidence="1">Purine metabolism; AMP biosynthesis via de novo pathway; AMP from IMP: step 1/2.</text>
</comment>
<comment type="subunit">
    <text evidence="1">Homodimer.</text>
</comment>
<comment type="subcellular location">
    <subcellularLocation>
        <location evidence="1">Cytoplasm</location>
    </subcellularLocation>
</comment>
<comment type="similarity">
    <text evidence="1">Belongs to the adenylosuccinate synthetase family.</text>
</comment>